<feature type="chain" id="PRO_0000219147" description="Beta-1,3-galactosyltransferase 1">
    <location>
        <begin position="1"/>
        <end position="326"/>
    </location>
</feature>
<feature type="topological domain" description="Cytoplasmic" evidence="3">
    <location>
        <begin position="1"/>
        <end position="6"/>
    </location>
</feature>
<feature type="transmembrane region" description="Helical; Signal-anchor for type II membrane protein" evidence="3">
    <location>
        <begin position="7"/>
        <end position="26"/>
    </location>
</feature>
<feature type="topological domain" description="Lumenal" evidence="3">
    <location>
        <begin position="27"/>
        <end position="326"/>
    </location>
</feature>
<feature type="glycosylation site" description="N-linked (GlcNAc...) asparagine" evidence="3">
    <location>
        <position position="47"/>
    </location>
</feature>
<feature type="glycosylation site" description="N-linked (GlcNAc...) asparagine" evidence="3">
    <location>
        <position position="151"/>
    </location>
</feature>
<accession>Q7JK25</accession>
<organism>
    <name type="scientific">Pan paniscus</name>
    <name type="common">Pygmy chimpanzee</name>
    <name type="synonym">Bonobo</name>
    <dbReference type="NCBI Taxonomy" id="9597"/>
    <lineage>
        <taxon>Eukaryota</taxon>
        <taxon>Metazoa</taxon>
        <taxon>Chordata</taxon>
        <taxon>Craniata</taxon>
        <taxon>Vertebrata</taxon>
        <taxon>Euteleostomi</taxon>
        <taxon>Mammalia</taxon>
        <taxon>Eutheria</taxon>
        <taxon>Euarchontoglires</taxon>
        <taxon>Primates</taxon>
        <taxon>Haplorrhini</taxon>
        <taxon>Catarrhini</taxon>
        <taxon>Hominidae</taxon>
        <taxon>Pan</taxon>
    </lineage>
</organism>
<proteinExistence type="inferred from homology"/>
<keyword id="KW-0325">Glycoprotein</keyword>
<keyword id="KW-0328">Glycosyltransferase</keyword>
<keyword id="KW-0333">Golgi apparatus</keyword>
<keyword id="KW-0443">Lipid metabolism</keyword>
<keyword id="KW-0464">Manganese</keyword>
<keyword id="KW-0472">Membrane</keyword>
<keyword id="KW-1185">Reference proteome</keyword>
<keyword id="KW-0735">Signal-anchor</keyword>
<keyword id="KW-0808">Transferase</keyword>
<keyword id="KW-0812">Transmembrane</keyword>
<keyword id="KW-1133">Transmembrane helix</keyword>
<reference key="1">
    <citation type="journal article" date="2004" name="Mol. Biol. Evol.">
        <title>Human-specific amino acid changes found in 103 protein-coding genes.</title>
        <authorList>
            <person name="Kitano T."/>
            <person name="Liu Y.-H."/>
            <person name="Ueda S."/>
            <person name="Saitou N."/>
        </authorList>
    </citation>
    <scope>NUCLEOTIDE SEQUENCE [GENOMIC DNA]</scope>
</reference>
<dbReference type="EC" id="2.4.1.86" evidence="2"/>
<dbReference type="EMBL" id="AB041409">
    <property type="protein sequence ID" value="BAA94494.1"/>
    <property type="molecule type" value="Genomic_DNA"/>
</dbReference>
<dbReference type="RefSeq" id="XP_003824359.1">
    <property type="nucleotide sequence ID" value="XM_003824311.3"/>
</dbReference>
<dbReference type="RefSeq" id="XP_008976299.1">
    <property type="nucleotide sequence ID" value="XM_008978051.2"/>
</dbReference>
<dbReference type="RefSeq" id="XP_008976300.1">
    <property type="nucleotide sequence ID" value="XM_008978052.2"/>
</dbReference>
<dbReference type="RefSeq" id="XP_008976301.1">
    <property type="nucleotide sequence ID" value="XM_008978053.2"/>
</dbReference>
<dbReference type="RefSeq" id="XP_063451503.1">
    <property type="nucleotide sequence ID" value="XM_063595433.1"/>
</dbReference>
<dbReference type="RefSeq" id="XP_063451504.1">
    <property type="nucleotide sequence ID" value="XM_063595434.1"/>
</dbReference>
<dbReference type="RefSeq" id="XP_063451505.1">
    <property type="nucleotide sequence ID" value="XM_063595435.1"/>
</dbReference>
<dbReference type="SMR" id="Q7JK25"/>
<dbReference type="CAZy" id="GT31">
    <property type="family name" value="Glycosyltransferase Family 31"/>
</dbReference>
<dbReference type="GlyCosmos" id="Q7JK25">
    <property type="glycosylation" value="2 sites, No reported glycans"/>
</dbReference>
<dbReference type="GeneID" id="100986605"/>
<dbReference type="eggNOG" id="KOG2287">
    <property type="taxonomic scope" value="Eukaryota"/>
</dbReference>
<dbReference type="UniPathway" id="UPA00378"/>
<dbReference type="Proteomes" id="UP000240080">
    <property type="component" value="Unplaced"/>
</dbReference>
<dbReference type="GO" id="GO:0000139">
    <property type="term" value="C:Golgi membrane"/>
    <property type="evidence" value="ECO:0007669"/>
    <property type="project" value="UniProtKB-SubCell"/>
</dbReference>
<dbReference type="GO" id="GO:0008499">
    <property type="term" value="F:N-acetyl-beta-D-glucosaminide beta-(1,3)-galactosyltransferase activity"/>
    <property type="evidence" value="ECO:0007669"/>
    <property type="project" value="UniProtKB-EC"/>
</dbReference>
<dbReference type="GO" id="GO:0006629">
    <property type="term" value="P:lipid metabolic process"/>
    <property type="evidence" value="ECO:0007669"/>
    <property type="project" value="UniProtKB-KW"/>
</dbReference>
<dbReference type="GO" id="GO:0006493">
    <property type="term" value="P:protein O-linked glycosylation"/>
    <property type="evidence" value="ECO:0007669"/>
    <property type="project" value="TreeGrafter"/>
</dbReference>
<dbReference type="FunFam" id="3.90.550.50:FF:000001">
    <property type="entry name" value="Hexosyltransferase"/>
    <property type="match status" value="1"/>
</dbReference>
<dbReference type="Gene3D" id="3.90.550.50">
    <property type="match status" value="1"/>
</dbReference>
<dbReference type="InterPro" id="IPR002659">
    <property type="entry name" value="Glyco_trans_31"/>
</dbReference>
<dbReference type="InterPro" id="IPR029044">
    <property type="entry name" value="Nucleotide-diphossugar_trans"/>
</dbReference>
<dbReference type="PANTHER" id="PTHR11214:SF20">
    <property type="entry name" value="BETA-1,3-GALACTOSYLTRANSFERASE 1"/>
    <property type="match status" value="1"/>
</dbReference>
<dbReference type="PANTHER" id="PTHR11214">
    <property type="entry name" value="BETA-1,3-N-ACETYLGLUCOSAMINYLTRANSFERASE"/>
    <property type="match status" value="1"/>
</dbReference>
<dbReference type="Pfam" id="PF01762">
    <property type="entry name" value="Galactosyl_T"/>
    <property type="match status" value="1"/>
</dbReference>
<dbReference type="SUPFAM" id="SSF53448">
    <property type="entry name" value="Nucleotide-diphospho-sugar transferases"/>
    <property type="match status" value="1"/>
</dbReference>
<name>B3GT1_PANPA</name>
<gene>
    <name type="primary">B3GALT1</name>
</gene>
<comment type="function">
    <text evidence="2">Beta-1,3-galactosyltransferase that transfers galactose from UDP-galactose to substrates with a terminal beta-N-acetylglucosamine (beta-GlcNAc) residue. Involved in the biosynthesis of the carbohydrate moieties of glycolipids and glycoproteins.</text>
</comment>
<comment type="catalytic activity">
    <reaction evidence="2">
        <text>an N-acetyl-beta-D-glucosaminyl derivative + UDP-alpha-D-galactose = a beta-D-galactosyl-(1-&gt;3)-N-acetyl-beta-D-glucosaminyl derivative + UDP + H(+)</text>
        <dbReference type="Rhea" id="RHEA:53432"/>
        <dbReference type="ChEBI" id="CHEBI:15378"/>
        <dbReference type="ChEBI" id="CHEBI:58223"/>
        <dbReference type="ChEBI" id="CHEBI:61631"/>
        <dbReference type="ChEBI" id="CHEBI:66914"/>
        <dbReference type="ChEBI" id="CHEBI:133506"/>
        <dbReference type="EC" id="2.4.1.86"/>
    </reaction>
    <physiologicalReaction direction="left-to-right" evidence="2">
        <dbReference type="Rhea" id="RHEA:53433"/>
    </physiologicalReaction>
</comment>
<comment type="catalytic activity">
    <reaction evidence="2">
        <text>a beta-D-GlcNAc-(1-&gt;3)-beta-D-Gal-(1-&gt;4)-beta-D-Glc-(1&lt;-&gt;1)-Cer(d18:1(4E)) + UDP-alpha-D-galactose = a beta-D-Gal-(1-&gt;3)-beta-D-GlcNAc-(1-&gt;3)-beta-D-Gal-(1-&gt;4)-beta-D-Glc-(1&lt;-&gt;1')-Cer(d18:1(4E)) + UDP + H(+)</text>
        <dbReference type="Rhea" id="RHEA:16045"/>
        <dbReference type="ChEBI" id="CHEBI:15378"/>
        <dbReference type="ChEBI" id="CHEBI:17103"/>
        <dbReference type="ChEBI" id="CHEBI:17292"/>
        <dbReference type="ChEBI" id="CHEBI:58223"/>
        <dbReference type="ChEBI" id="CHEBI:66914"/>
        <dbReference type="EC" id="2.4.1.86"/>
    </reaction>
    <physiologicalReaction direction="left-to-right" evidence="2">
        <dbReference type="Rhea" id="RHEA:16046"/>
    </physiologicalReaction>
</comment>
<comment type="cofactor">
    <cofactor evidence="1">
        <name>Mn(2+)</name>
        <dbReference type="ChEBI" id="CHEBI:29035"/>
    </cofactor>
</comment>
<comment type="pathway">
    <text>Protein modification; protein glycosylation.</text>
</comment>
<comment type="subcellular location">
    <subcellularLocation>
        <location evidence="4">Golgi apparatus membrane</location>
        <topology evidence="4">Single-pass type II membrane protein</topology>
    </subcellularLocation>
</comment>
<comment type="similarity">
    <text evidence="4">Belongs to the glycosyltransferase 31 family.</text>
</comment>
<sequence length="326" mass="37993">MASKVSCLYVLTVVCWASALWYLSITRPTSSYTGSKPFSHLTVARKNFTFGNIRTRPINPHSFEFLINEPNKCEKNIPFLVILISTTHKEFDARQAIRETWGDENNFKGIKIATLFLLGKNADPVLNQMVEQESQIFHDIIVEDFIDSYHNLTLKTLMGMRWVATFCSKAKYVMKTDSDIFVNMDNLIYKLLKPSTKPRRRYFTGYVINGGPIRDVRSKWYMPRDLYPDSNYPPFCSGTGYIFSADVAELIYKTSLHTRLLHLEDVYVGLCLRKLGIHPFQNSGFNHWKMAYSLCRYRRVITVHQISPEEMHRIWNDMSSKKHLRC</sequence>
<protein>
    <recommendedName>
        <fullName>Beta-1,3-galactosyltransferase 1</fullName>
        <shortName>Beta-1,3-GalTase 1</shortName>
        <shortName>Beta3Gal-T1</shortName>
        <shortName>Beta3GalT1</shortName>
        <ecNumber evidence="2">2.4.1.86</ecNumber>
    </recommendedName>
    <alternativeName>
        <fullName>UDP-galactose:beta-N-acetyl-glucosamine-beta-1,3-galactosyltransferase 1</fullName>
    </alternativeName>
</protein>
<evidence type="ECO:0000250" key="1"/>
<evidence type="ECO:0000250" key="2">
    <source>
        <dbReference type="UniProtKB" id="Q9Y5Z6"/>
    </source>
</evidence>
<evidence type="ECO:0000255" key="3"/>
<evidence type="ECO:0000305" key="4"/>